<dbReference type="EC" id="7.1.1.2"/>
<dbReference type="EMBL" id="X73933">
    <property type="protein sequence ID" value="CAA52138.1"/>
    <property type="molecule type" value="Genomic_DNA"/>
</dbReference>
<dbReference type="PIR" id="S44414">
    <property type="entry name" value="S44414"/>
</dbReference>
<dbReference type="SMR" id="P43196"/>
<dbReference type="GO" id="GO:0031966">
    <property type="term" value="C:mitochondrial membrane"/>
    <property type="evidence" value="ECO:0007669"/>
    <property type="project" value="UniProtKB-SubCell"/>
</dbReference>
<dbReference type="GO" id="GO:0008137">
    <property type="term" value="F:NADH dehydrogenase (ubiquinone) activity"/>
    <property type="evidence" value="ECO:0007669"/>
    <property type="project" value="UniProtKB-EC"/>
</dbReference>
<dbReference type="Gene3D" id="1.20.120.1200">
    <property type="entry name" value="NADH-ubiquinone/plastoquinone oxidoreductase chain 6, subunit NuoJ"/>
    <property type="match status" value="1"/>
</dbReference>
<dbReference type="InterPro" id="IPR050269">
    <property type="entry name" value="ComplexI_Subunit6"/>
</dbReference>
<dbReference type="InterPro" id="IPR001457">
    <property type="entry name" value="NADH_UbQ/plastoQ_OxRdtase_su6"/>
</dbReference>
<dbReference type="InterPro" id="IPR042106">
    <property type="entry name" value="Nuo/plastoQ_OxRdtase_6_NuoJ"/>
</dbReference>
<dbReference type="PANTHER" id="PTHR11435">
    <property type="entry name" value="NADH UBIQUINONE OXIDOREDUCTASE SUBUNIT ND6"/>
    <property type="match status" value="1"/>
</dbReference>
<dbReference type="PANTHER" id="PTHR11435:SF1">
    <property type="entry name" value="NADH-UBIQUINONE OXIDOREDUCTASE CHAIN 6"/>
    <property type="match status" value="1"/>
</dbReference>
<dbReference type="Pfam" id="PF00499">
    <property type="entry name" value="Oxidored_q3"/>
    <property type="match status" value="1"/>
</dbReference>
<sequence>MTYLVLLLGLCFVLGGLAVASNPSPYYGVVGLVLASVAGCGWLLSLGVSFVSLVLFMVYLGGMLVVFVYSVSLAADPFPEAWGDWRVVGYGASFILVVIAGMIVGGLIECWKVGVVTVDSGGMFSVRLDFSGVAMFYSYGVGMFLVAGWGLLLTLFVVLELVRGLSRGAIRAV</sequence>
<keyword id="KW-0249">Electron transport</keyword>
<keyword id="KW-0472">Membrane</keyword>
<keyword id="KW-0496">Mitochondrion</keyword>
<keyword id="KW-0520">NAD</keyword>
<keyword id="KW-0679">Respiratory chain</keyword>
<keyword id="KW-1278">Translocase</keyword>
<keyword id="KW-0812">Transmembrane</keyword>
<keyword id="KW-1133">Transmembrane helix</keyword>
<keyword id="KW-0813">Transport</keyword>
<keyword id="KW-0830">Ubiquinone</keyword>
<evidence type="ECO:0000250" key="1"/>
<evidence type="ECO:0000255" key="2"/>
<evidence type="ECO:0000305" key="3"/>
<gene>
    <name type="primary">MT-ND6</name>
    <name type="synonym">MTND6</name>
    <name type="synonym">NADH6</name>
    <name type="synonym">ND6</name>
</gene>
<reference key="1">
    <citation type="journal article" date="1994" name="Curr. Genet.">
        <title>Intragenic rearrangements in the mitochondrial NADH dehydrogenase subunit 6 gene of vertebrates.</title>
        <authorList>
            <person name="Moum T."/>
            <person name="Willassen N.P."/>
            <person name="Johansen S."/>
        </authorList>
    </citation>
    <scope>NUCLEOTIDE SEQUENCE [GENOMIC DNA]</scope>
</reference>
<organism>
    <name type="scientific">Calidris maritima</name>
    <name type="common">Purple sandpiper</name>
    <name type="synonym">Erolia maritima</name>
    <dbReference type="NCBI Taxonomy" id="28682"/>
    <lineage>
        <taxon>Eukaryota</taxon>
        <taxon>Metazoa</taxon>
        <taxon>Chordata</taxon>
        <taxon>Craniata</taxon>
        <taxon>Vertebrata</taxon>
        <taxon>Euteleostomi</taxon>
        <taxon>Archelosauria</taxon>
        <taxon>Archosauria</taxon>
        <taxon>Dinosauria</taxon>
        <taxon>Saurischia</taxon>
        <taxon>Theropoda</taxon>
        <taxon>Coelurosauria</taxon>
        <taxon>Aves</taxon>
        <taxon>Neognathae</taxon>
        <taxon>Neoaves</taxon>
        <taxon>Charadriiformes</taxon>
        <taxon>Scolopacidae</taxon>
        <taxon>Calidris</taxon>
    </lineage>
</organism>
<comment type="function">
    <text evidence="1">Core subunit of the mitochondrial membrane respiratory chain NADH dehydrogenase (Complex I) that is believed to belong to the minimal assembly required for catalysis. Complex I functions in the transfer of electrons from NADH to the respiratory chain. The immediate electron acceptor for the enzyme is believed to be ubiquinone (By similarity).</text>
</comment>
<comment type="catalytic activity">
    <reaction>
        <text>a ubiquinone + NADH + 5 H(+)(in) = a ubiquinol + NAD(+) + 4 H(+)(out)</text>
        <dbReference type="Rhea" id="RHEA:29091"/>
        <dbReference type="Rhea" id="RHEA-COMP:9565"/>
        <dbReference type="Rhea" id="RHEA-COMP:9566"/>
        <dbReference type="ChEBI" id="CHEBI:15378"/>
        <dbReference type="ChEBI" id="CHEBI:16389"/>
        <dbReference type="ChEBI" id="CHEBI:17976"/>
        <dbReference type="ChEBI" id="CHEBI:57540"/>
        <dbReference type="ChEBI" id="CHEBI:57945"/>
        <dbReference type="EC" id="7.1.1.2"/>
    </reaction>
</comment>
<comment type="subcellular location">
    <subcellularLocation>
        <location evidence="3">Mitochondrion membrane</location>
        <topology evidence="3">Multi-pass membrane protein</topology>
    </subcellularLocation>
</comment>
<comment type="similarity">
    <text evidence="3">Belongs to the complex I subunit 6 family.</text>
</comment>
<geneLocation type="mitochondrion"/>
<proteinExistence type="inferred from homology"/>
<protein>
    <recommendedName>
        <fullName>NADH-ubiquinone oxidoreductase chain 6</fullName>
        <ecNumber>7.1.1.2</ecNumber>
    </recommendedName>
    <alternativeName>
        <fullName>NADH dehydrogenase subunit 6</fullName>
    </alternativeName>
</protein>
<name>NU6M_CALMA</name>
<feature type="chain" id="PRO_0000118258" description="NADH-ubiquinone oxidoreductase chain 6">
    <location>
        <begin position="1"/>
        <end position="173"/>
    </location>
</feature>
<feature type="transmembrane region" description="Helical" evidence="2">
    <location>
        <begin position="1"/>
        <end position="21"/>
    </location>
</feature>
<feature type="transmembrane region" description="Helical" evidence="2">
    <location>
        <begin position="27"/>
        <end position="47"/>
    </location>
</feature>
<feature type="transmembrane region" description="Helical" evidence="2">
    <location>
        <begin position="48"/>
        <end position="68"/>
    </location>
</feature>
<feature type="transmembrane region" description="Helical" evidence="2">
    <location>
        <begin position="88"/>
        <end position="108"/>
    </location>
</feature>
<feature type="transmembrane region" description="Helical" evidence="2">
    <location>
        <begin position="139"/>
        <end position="159"/>
    </location>
</feature>
<accession>P43196</accession>